<comment type="function">
    <text evidence="2 4">Involved in the uptake of iron in complex with vibriobactin, a catecholate siderophore synthesized by V.cholerae. Binds and transports ferric vibriobactin across the outer membrane (PubMed:1317381). The energy source is provided by the inner membrane TonB system (Probable).</text>
</comment>
<comment type="subcellular location">
    <subcellularLocation>
        <location evidence="1 5">Cell outer membrane</location>
        <topology evidence="1">Multi-pass membrane protein</topology>
    </subcellularLocation>
</comment>
<comment type="induction">
    <text evidence="2">Expression is up-regulated by low iron concentration condition. Iron-regulated expression is repressed by Fur.</text>
</comment>
<comment type="disruption phenotype">
    <text evidence="2">Cannot bind or utilize exogenous ferric vibriobactin.</text>
</comment>
<comment type="similarity">
    <text evidence="4">Belongs to the TonB-dependent receptor family.</text>
</comment>
<sequence>MAVLCPARVSVAENKKFKLHTLSAMMMGLFTGSFAYAETQNTSNQEQEMPVLVVIGEKTQRSIYETSASVEVFDQDTIERTPGATEIDDLLQLIPNLVDSGQSNNMPTIRGIDGSGPSVGGLASFAGTSPRLNMSIDGRSLTYSEIAFGPRSLWDMQQVEIYLGPQSYIQGRNTSAGAIVMKSNDPTHHFESAVKAGIGESDYSQTAGMISAPIIQDELAFRLSFDQQKRDSFVDLAAFEPAGDPKKIEMNSVRGKLLYEPSALDGFKTTLTLSHMDSRGPQTENINVAGNEAFRPVYETASFTTAWDIIWHLNDLFTFENNLVYADFSYDRYTNPNSRGDFNTDGKEFHIEPLLRYIALDGSVNTLIGARYYQSSQDDMYIDAASAYPMDGRTKAKSVFAEVTYALTPSINVNLAGRFEREQVKRNVSHPRYKLDYDETSSVFLPKLDVAYTPVQGQTYGIKAAKGYNASGAGLAFNSMQFTGFRPYEFEQESIWNYEFYTRHRFSHSVEVLTNLFYNDFDSMQMTQTTSSGDVFIANLDEASTYGAEIGSRWYATSSLELFANLGLLKTEFKETTGNTKELPRAPKMSANVGLLYDFGQGFEFSSNAAYTGSYFSESGNSEKFAIDSYWVANAQLAYVFEHGRATLYATNLLDSDKTTLYLSTNNTLDQLKQQPRMIGASVQLNF</sequence>
<protein>
    <recommendedName>
        <fullName evidence="3">Ferric vibriobactin receptor ViuA</fullName>
    </recommendedName>
    <alternativeName>
        <fullName evidence="4">Vibriobactin uptake protein A</fullName>
    </alternativeName>
</protein>
<gene>
    <name evidence="3" type="primary">viuA</name>
    <name type="ordered locus">VC0395_A1803</name>
    <name type="ordered locus">VC395_2327</name>
</gene>
<accession>A5F661</accession>
<accession>C3M3G8</accession>
<accession>Q00964</accession>
<accession>Q9JQ00</accession>
<reference key="1">
    <citation type="journal article" date="1992" name="J. Bacteriol.">
        <title>Cloning, sequencing, and transcriptional regulation of viuA, the gene encoding the ferric vibriobactin receptor of Vibrio cholerae.</title>
        <authorList>
            <person name="Butterton J.R."/>
            <person name="Stoebner J.A."/>
            <person name="Payne S.M."/>
            <person name="Calderwood S.B."/>
        </authorList>
    </citation>
    <scope>NUCLEOTIDE SEQUENCE [GENOMIC DNA]</scope>
    <scope>FUNCTION</scope>
    <scope>SUBCELLULAR LOCATION</scope>
    <scope>INDUCTION</scope>
    <scope>DISRUPTION PHENOTYPE</scope>
    <source>
        <strain evidence="3">ATCC 39541 / Classical Ogawa 395 / O395</strain>
    </source>
</reference>
<reference key="2">
    <citation type="submission" date="1997-10" db="EMBL/GenBank/DDBJ databases">
        <authorList>
            <person name="Liao W.J."/>
            <person name="Choi M.H."/>
            <person name="Butterton J.R."/>
        </authorList>
    </citation>
    <scope>NUCLEOTIDE SEQUENCE [GENOMIC DNA]</scope>
</reference>
<reference key="3">
    <citation type="submission" date="2007-03" db="EMBL/GenBank/DDBJ databases">
        <authorList>
            <person name="Heidelberg J."/>
        </authorList>
    </citation>
    <scope>NUCLEOTIDE SEQUENCE [LARGE SCALE GENOMIC DNA]</scope>
    <source>
        <strain>ATCC 39541 / Classical Ogawa 395 / O395</strain>
    </source>
</reference>
<reference key="4">
    <citation type="journal article" date="2008" name="PLoS ONE">
        <title>A recalibrated molecular clock and independent origins for the cholera pandemic clones.</title>
        <authorList>
            <person name="Feng L."/>
            <person name="Reeves P.R."/>
            <person name="Lan R."/>
            <person name="Ren Y."/>
            <person name="Gao C."/>
            <person name="Zhou Z."/>
            <person name="Ren Y."/>
            <person name="Cheng J."/>
            <person name="Wang W."/>
            <person name="Wang J."/>
            <person name="Qian W."/>
            <person name="Li D."/>
            <person name="Wang L."/>
        </authorList>
    </citation>
    <scope>NUCLEOTIDE SEQUENCE [LARGE SCALE GENOMIC DNA]</scope>
    <source>
        <strain>ATCC 39541 / Classical Ogawa 395 / O395</strain>
    </source>
</reference>
<organism>
    <name type="scientific">Vibrio cholerae serotype O1 (strain ATCC 39541 / Classical Ogawa 395 / O395)</name>
    <dbReference type="NCBI Taxonomy" id="345073"/>
    <lineage>
        <taxon>Bacteria</taxon>
        <taxon>Pseudomonadati</taxon>
        <taxon>Pseudomonadota</taxon>
        <taxon>Gammaproteobacteria</taxon>
        <taxon>Vibrionales</taxon>
        <taxon>Vibrionaceae</taxon>
        <taxon>Vibrio</taxon>
    </lineage>
</organism>
<name>VIUA_VIBC3</name>
<feature type="signal peptide" evidence="4">
    <location>
        <begin position="1"/>
        <end position="37"/>
    </location>
</feature>
<feature type="chain" id="PRO_0000324813" description="Ferric vibriobactin receptor ViuA">
    <location>
        <begin position="38"/>
        <end position="687"/>
    </location>
</feature>
<feature type="domain" description="TBDR plug" evidence="1">
    <location>
        <begin position="62"/>
        <end position="184"/>
    </location>
</feature>
<feature type="domain" description="TBDR beta-barrel" evidence="1">
    <location>
        <begin position="189"/>
        <end position="687"/>
    </location>
</feature>
<evidence type="ECO:0000255" key="1">
    <source>
        <dbReference type="PROSITE-ProRule" id="PRU01360"/>
    </source>
</evidence>
<evidence type="ECO:0000269" key="2">
    <source>
    </source>
</evidence>
<evidence type="ECO:0000303" key="3">
    <source>
    </source>
</evidence>
<evidence type="ECO:0000305" key="4"/>
<evidence type="ECO:0000305" key="5">
    <source>
    </source>
</evidence>
<proteinExistence type="evidence at transcript level"/>
<dbReference type="EMBL" id="AF030977">
    <property type="protein sequence ID" value="AAB86828.1"/>
    <property type="molecule type" value="Genomic_DNA"/>
</dbReference>
<dbReference type="EMBL" id="CP000627">
    <property type="protein sequence ID" value="ABQ21470.1"/>
    <property type="molecule type" value="Genomic_DNA"/>
</dbReference>
<dbReference type="EMBL" id="CP001235">
    <property type="protein sequence ID" value="ACP10317.1"/>
    <property type="molecule type" value="Genomic_DNA"/>
</dbReference>
<dbReference type="PIR" id="A41905">
    <property type="entry name" value="A41905"/>
</dbReference>
<dbReference type="RefSeq" id="WP_000279435.1">
    <property type="nucleotide sequence ID" value="NZ_JAACZH010000022.1"/>
</dbReference>
<dbReference type="SMR" id="A5F661"/>
<dbReference type="TCDB" id="1.B.14.8.3">
    <property type="family name" value="the outer membrane receptor (omr) family"/>
</dbReference>
<dbReference type="KEGG" id="vco:VC0395_A1803"/>
<dbReference type="KEGG" id="vcr:VC395_2327"/>
<dbReference type="PATRIC" id="fig|345073.21.peg.2243"/>
<dbReference type="eggNOG" id="COG1629">
    <property type="taxonomic scope" value="Bacteria"/>
</dbReference>
<dbReference type="eggNOG" id="COG4774">
    <property type="taxonomic scope" value="Bacteria"/>
</dbReference>
<dbReference type="HOGENOM" id="CLU_008287_15_2_6"/>
<dbReference type="OrthoDB" id="127311at2"/>
<dbReference type="Proteomes" id="UP000000249">
    <property type="component" value="Chromosome 2"/>
</dbReference>
<dbReference type="GO" id="GO:0009279">
    <property type="term" value="C:cell outer membrane"/>
    <property type="evidence" value="ECO:0000305"/>
    <property type="project" value="UniProtKB"/>
</dbReference>
<dbReference type="GO" id="GO:0015092">
    <property type="term" value="F:high-affinity ferric iron transmembrane transporter activity"/>
    <property type="evidence" value="ECO:0000315"/>
    <property type="project" value="UniProtKB"/>
</dbReference>
<dbReference type="GO" id="GO:0015344">
    <property type="term" value="F:siderophore uptake transmembrane transporter activity"/>
    <property type="evidence" value="ECO:0000315"/>
    <property type="project" value="UniProtKB"/>
</dbReference>
<dbReference type="GO" id="GO:0015343">
    <property type="term" value="F:siderophore-iron transmembrane transporter activity"/>
    <property type="evidence" value="ECO:0000315"/>
    <property type="project" value="UniProtKB"/>
</dbReference>
<dbReference type="GO" id="GO:0038023">
    <property type="term" value="F:signaling receptor activity"/>
    <property type="evidence" value="ECO:0007669"/>
    <property type="project" value="InterPro"/>
</dbReference>
<dbReference type="GO" id="GO:0034755">
    <property type="term" value="P:iron ion transmembrane transport"/>
    <property type="evidence" value="ECO:0000315"/>
    <property type="project" value="UniProtKB"/>
</dbReference>
<dbReference type="GO" id="GO:0033214">
    <property type="term" value="P:siderophore-dependent iron import into cell"/>
    <property type="evidence" value="ECO:0000315"/>
    <property type="project" value="UniProtKB"/>
</dbReference>
<dbReference type="Gene3D" id="2.40.170.20">
    <property type="entry name" value="TonB-dependent receptor, beta-barrel domain"/>
    <property type="match status" value="1"/>
</dbReference>
<dbReference type="InterPro" id="IPR012910">
    <property type="entry name" value="Plug_dom"/>
</dbReference>
<dbReference type="InterPro" id="IPR039426">
    <property type="entry name" value="TonB-dep_rcpt-like"/>
</dbReference>
<dbReference type="InterPro" id="IPR000531">
    <property type="entry name" value="TonB-dep_rcpt_b-brl"/>
</dbReference>
<dbReference type="InterPro" id="IPR036942">
    <property type="entry name" value="TonB_rcpt_b-brl_sf"/>
</dbReference>
<dbReference type="InterPro" id="IPR010105">
    <property type="entry name" value="TonB_sidphr_rcpt"/>
</dbReference>
<dbReference type="NCBIfam" id="TIGR01783">
    <property type="entry name" value="TonB-siderophor"/>
    <property type="match status" value="1"/>
</dbReference>
<dbReference type="PANTHER" id="PTHR32552">
    <property type="entry name" value="FERRICHROME IRON RECEPTOR-RELATED"/>
    <property type="match status" value="1"/>
</dbReference>
<dbReference type="PANTHER" id="PTHR32552:SF81">
    <property type="entry name" value="TONB-DEPENDENT OUTER MEMBRANE RECEPTOR"/>
    <property type="match status" value="1"/>
</dbReference>
<dbReference type="Pfam" id="PF07715">
    <property type="entry name" value="Plug"/>
    <property type="match status" value="1"/>
</dbReference>
<dbReference type="Pfam" id="PF00593">
    <property type="entry name" value="TonB_dep_Rec_b-barrel"/>
    <property type="match status" value="1"/>
</dbReference>
<dbReference type="SUPFAM" id="SSF56935">
    <property type="entry name" value="Porins"/>
    <property type="match status" value="1"/>
</dbReference>
<dbReference type="PROSITE" id="PS52016">
    <property type="entry name" value="TONB_DEPENDENT_REC_3"/>
    <property type="match status" value="1"/>
</dbReference>
<keyword id="KW-0998">Cell outer membrane</keyword>
<keyword id="KW-0406">Ion transport</keyword>
<keyword id="KW-0408">Iron</keyword>
<keyword id="KW-0410">Iron transport</keyword>
<keyword id="KW-0472">Membrane</keyword>
<keyword id="KW-0675">Receptor</keyword>
<keyword id="KW-0732">Signal</keyword>
<keyword id="KW-0798">TonB box</keyword>
<keyword id="KW-0812">Transmembrane</keyword>
<keyword id="KW-1134">Transmembrane beta strand</keyword>
<keyword id="KW-0813">Transport</keyword>